<keyword id="KW-0249">Electron transport</keyword>
<keyword id="KW-0472">Membrane</keyword>
<keyword id="KW-0496">Mitochondrion</keyword>
<keyword id="KW-0999">Mitochondrion inner membrane</keyword>
<keyword id="KW-0520">NAD</keyword>
<keyword id="KW-0679">Respiratory chain</keyword>
<keyword id="KW-1278">Translocase</keyword>
<keyword id="KW-0812">Transmembrane</keyword>
<keyword id="KW-1133">Transmembrane helix</keyword>
<keyword id="KW-0813">Transport</keyword>
<keyword id="KW-0830">Ubiquinone</keyword>
<sequence>MNMMLILLMNIALAAILISLAFWLPHLNVYTEKANPYECGFDPMSSARLPFSMKFFLVAITFLLFDLEIALLLPLPWAMQFPNMNMLMTMAFILITILALGLAYEWTQKGLEWTE</sequence>
<name>NU3M_MICPE</name>
<comment type="function">
    <text evidence="1">Core subunit of the mitochondrial membrane respiratory chain NADH dehydrogenase (Complex I) which catalyzes electron transfer from NADH through the respiratory chain, using ubiquinone as an electron acceptor. Essential for the catalytic activity of complex I.</text>
</comment>
<comment type="catalytic activity">
    <reaction evidence="1">
        <text>a ubiquinone + NADH + 5 H(+)(in) = a ubiquinol + NAD(+) + 4 H(+)(out)</text>
        <dbReference type="Rhea" id="RHEA:29091"/>
        <dbReference type="Rhea" id="RHEA-COMP:9565"/>
        <dbReference type="Rhea" id="RHEA-COMP:9566"/>
        <dbReference type="ChEBI" id="CHEBI:15378"/>
        <dbReference type="ChEBI" id="CHEBI:16389"/>
        <dbReference type="ChEBI" id="CHEBI:17976"/>
        <dbReference type="ChEBI" id="CHEBI:57540"/>
        <dbReference type="ChEBI" id="CHEBI:57945"/>
        <dbReference type="EC" id="7.1.1.2"/>
    </reaction>
</comment>
<comment type="subunit">
    <text evidence="1">Core subunit of respiratory chain NADH dehydrogenase (Complex I) which is composed of 45 different subunits. Interacts with TMEM186. Interacts with TMEM242 (By similarity).</text>
</comment>
<comment type="subcellular location">
    <subcellularLocation>
        <location evidence="2">Mitochondrion inner membrane</location>
        <topology evidence="3">Multi-pass membrane protein</topology>
    </subcellularLocation>
</comment>
<comment type="similarity">
    <text evidence="4">Belongs to the complex I subunit 3 family.</text>
</comment>
<gene>
    <name evidence="1" type="primary">MT-ND3</name>
    <name type="synonym">MTND3</name>
    <name type="synonym">NADH3</name>
    <name type="synonym">ND3</name>
</gene>
<protein>
    <recommendedName>
        <fullName evidence="1">NADH-ubiquinone oxidoreductase chain 3</fullName>
        <ecNumber evidence="1">7.1.1.2</ecNumber>
    </recommendedName>
    <alternativeName>
        <fullName>NADH dehydrogenase subunit 3</fullName>
    </alternativeName>
</protein>
<reference key="1">
    <citation type="journal article" date="1998" name="Mol. Biol. Evol.">
        <title>Molecular systematics and paleobiogeography of the South American sigmodontine rodents.</title>
        <authorList>
            <person name="Engel S.R."/>
            <person name="Hogan K.M."/>
            <person name="Taylor J.F."/>
            <person name="Davis S.K."/>
        </authorList>
    </citation>
    <scope>NUCLEOTIDE SEQUENCE [GENOMIC DNA]</scope>
</reference>
<accession>O21519</accession>
<proteinExistence type="inferred from homology"/>
<dbReference type="EC" id="7.1.1.2" evidence="1"/>
<dbReference type="EMBL" id="U83806">
    <property type="protein sequence ID" value="AAB87184.1"/>
    <property type="molecule type" value="Genomic_DNA"/>
</dbReference>
<dbReference type="SMR" id="O21519"/>
<dbReference type="GO" id="GO:0005743">
    <property type="term" value="C:mitochondrial inner membrane"/>
    <property type="evidence" value="ECO:0000250"/>
    <property type="project" value="UniProtKB"/>
</dbReference>
<dbReference type="GO" id="GO:0030964">
    <property type="term" value="C:NADH dehydrogenase complex"/>
    <property type="evidence" value="ECO:0007669"/>
    <property type="project" value="TreeGrafter"/>
</dbReference>
<dbReference type="GO" id="GO:0008137">
    <property type="term" value="F:NADH dehydrogenase (ubiquinone) activity"/>
    <property type="evidence" value="ECO:0000250"/>
    <property type="project" value="UniProtKB"/>
</dbReference>
<dbReference type="GO" id="GO:0006120">
    <property type="term" value="P:mitochondrial electron transport, NADH to ubiquinone"/>
    <property type="evidence" value="ECO:0000250"/>
    <property type="project" value="UniProtKB"/>
</dbReference>
<dbReference type="FunFam" id="1.20.58.1610:FF:000004">
    <property type="entry name" value="NADH-quinone oxidoreductase subunit A"/>
    <property type="match status" value="1"/>
</dbReference>
<dbReference type="Gene3D" id="1.20.58.1610">
    <property type="entry name" value="NADH:ubiquinone/plastoquinone oxidoreductase, chain 3"/>
    <property type="match status" value="1"/>
</dbReference>
<dbReference type="InterPro" id="IPR000440">
    <property type="entry name" value="NADH_UbQ/plastoQ_OxRdtase_su3"/>
</dbReference>
<dbReference type="InterPro" id="IPR038430">
    <property type="entry name" value="NDAH_ubi_oxred_su3_sf"/>
</dbReference>
<dbReference type="PANTHER" id="PTHR11058">
    <property type="entry name" value="NADH-UBIQUINONE OXIDOREDUCTASE CHAIN 3"/>
    <property type="match status" value="1"/>
</dbReference>
<dbReference type="PANTHER" id="PTHR11058:SF9">
    <property type="entry name" value="NADH-UBIQUINONE OXIDOREDUCTASE CHAIN 3"/>
    <property type="match status" value="1"/>
</dbReference>
<dbReference type="Pfam" id="PF00507">
    <property type="entry name" value="Oxidored_q4"/>
    <property type="match status" value="1"/>
</dbReference>
<feature type="chain" id="PRO_0000117764" description="NADH-ubiquinone oxidoreductase chain 3">
    <location>
        <begin position="1"/>
        <end position="115"/>
    </location>
</feature>
<feature type="transmembrane region" description="Helical" evidence="3">
    <location>
        <begin position="4"/>
        <end position="24"/>
    </location>
</feature>
<feature type="transmembrane region" description="Helical" evidence="3">
    <location>
        <begin position="55"/>
        <end position="75"/>
    </location>
</feature>
<feature type="transmembrane region" description="Helical" evidence="3">
    <location>
        <begin position="86"/>
        <end position="106"/>
    </location>
</feature>
<organism>
    <name type="scientific">Microtus pennsylvanicus</name>
    <name type="common">Meadow vole</name>
    <dbReference type="NCBI Taxonomy" id="10058"/>
    <lineage>
        <taxon>Eukaryota</taxon>
        <taxon>Metazoa</taxon>
        <taxon>Chordata</taxon>
        <taxon>Craniata</taxon>
        <taxon>Vertebrata</taxon>
        <taxon>Euteleostomi</taxon>
        <taxon>Mammalia</taxon>
        <taxon>Eutheria</taxon>
        <taxon>Euarchontoglires</taxon>
        <taxon>Glires</taxon>
        <taxon>Rodentia</taxon>
        <taxon>Myomorpha</taxon>
        <taxon>Muroidea</taxon>
        <taxon>Cricetidae</taxon>
        <taxon>Arvicolinae</taxon>
        <taxon>Microtus</taxon>
    </lineage>
</organism>
<evidence type="ECO:0000250" key="1">
    <source>
        <dbReference type="UniProtKB" id="P03897"/>
    </source>
</evidence>
<evidence type="ECO:0000250" key="2">
    <source>
        <dbReference type="UniProtKB" id="P03898"/>
    </source>
</evidence>
<evidence type="ECO:0000255" key="3"/>
<evidence type="ECO:0000305" key="4"/>
<geneLocation type="mitochondrion"/>